<reference key="1">
    <citation type="journal article" date="1990" name="Mol. Microbiol.">
        <title>Sequence of the peh gene of Erwinia carotovora: homology between Erwinia and plant enzymes.</title>
        <authorList>
            <person name="Hinton J.C.D."/>
            <person name="Gill D.R."/>
            <person name="Lalo D."/>
            <person name="Plastow G.S."/>
            <person name="Salmond G.P.C."/>
        </authorList>
    </citation>
    <scope>NUCLEOTIDE SEQUENCE [GENOMIC DNA]</scope>
    <source>
        <strain>SCRI 193</strain>
    </source>
</reference>
<reference key="2">
    <citation type="journal article" date="1994" name="Appl. Environ. Microbiol.">
        <title>Nucleotide sequence and expression of a novel pectate lyase gene (pel-3) and a closely linked endopolygalacturonase gene (peh-1) of Erwinia carotovora subsp. carotovora 71.</title>
        <authorList>
            <person name="Liu Y."/>
            <person name="Chatterjee A."/>
            <person name="Chatterjee A.K."/>
        </authorList>
    </citation>
    <scope>NUCLEOTIDE SEQUENCE [GENOMIC DNA]</scope>
    <source>
        <strain>71</strain>
    </source>
</reference>
<reference key="3">
    <citation type="journal article" date="1993" name="J. Appl. Bacteriol.">
        <title>A note on the primary structure and expression of an Erwinia carotovora polygalacturonase-encoding gene (peh1) in Escherichia coli and Saccharomyces cerevisiae.</title>
        <authorList>
            <person name="Laing E."/>
            <person name="Pretorius I.S."/>
        </authorList>
    </citation>
    <scope>NUCLEOTIDE SEQUENCE [GENOMIC DNA]</scope>
    <source>
        <strain>71</strain>
    </source>
</reference>
<comment type="function">
    <text>Involved in maceration and soft-rotting of plant tissue.</text>
</comment>
<comment type="catalytic activity">
    <reaction>
        <text>(1,4-alpha-D-galacturonosyl)n+m + H2O = (1,4-alpha-D-galacturonosyl)n + (1,4-alpha-D-galacturonosyl)m.</text>
        <dbReference type="EC" id="3.2.1.15"/>
    </reaction>
</comment>
<comment type="subunit">
    <text>Monomer.</text>
</comment>
<comment type="subcellular location">
    <subcellularLocation>
        <location>Secreted</location>
    </subcellularLocation>
</comment>
<comment type="similarity">
    <text evidence="2">Belongs to the glycosyl hydrolase 28 family.</text>
</comment>
<accession>P18192</accession>
<accession>Q08933</accession>
<accession>Q47464</accession>
<gene>
    <name type="primary">peh</name>
    <name type="synonym">peh-1</name>
    <name type="synonym">peh1</name>
</gene>
<organism>
    <name type="scientific">Pectobacterium carotovorum subsp. carotovorum</name>
    <name type="common">Erwinia carotovora subsp. carotovora</name>
    <dbReference type="NCBI Taxonomy" id="555"/>
    <lineage>
        <taxon>Bacteria</taxon>
        <taxon>Pseudomonadati</taxon>
        <taxon>Pseudomonadota</taxon>
        <taxon>Gammaproteobacteria</taxon>
        <taxon>Enterobacterales</taxon>
        <taxon>Pectobacteriaceae</taxon>
        <taxon>Pectobacterium</taxon>
    </lineage>
</organism>
<name>PGLR1_PECCC</name>
<proteinExistence type="inferred from homology"/>
<evidence type="ECO:0000255" key="1">
    <source>
        <dbReference type="PROSITE-ProRule" id="PRU10052"/>
    </source>
</evidence>
<evidence type="ECO:0000305" key="2"/>
<sequence length="402" mass="42634">MEYQSGKRVLSLSLGLIGLFSASAFASDSRTVSEPKAPSSCTVLKADSSTATSTIQKALNNCGQGKAVKLSAGSSSVFLSGPLSLPSGVSLLIDKGVTLRAVNNAKSFENAPSSCGVVDTNGKGCDAFITATSTTNSGIYGPGTIDGQGGVKLQDKKVSWWDLAADAKVKKLKQNTPRLIQINKSKNFTLYNVSLINSPNFHVVFSDGDGFTAWKTTIKTPSTARNTDGIDPMSSKNITIAHSNISTGDDNVAIKAYKGRSETRNISILHNEFGTGHGMSIGSETMGVYNVTVDDLIMTGTTNGLRIKSDKSAAGVVNGVRYSNVVMKNVAKPIVIDTVYEKKEGSNVPDWSDITFKDITSQTKGVVVLNGENAKKPIEVTMKNVKLTSDSTWQIKNVTVKK</sequence>
<feature type="signal peptide">
    <location>
        <begin position="1"/>
        <end position="23"/>
    </location>
</feature>
<feature type="chain" id="PRO_0000024758" description="Endo-polygalacturonase">
    <location>
        <begin position="24"/>
        <end position="402"/>
    </location>
</feature>
<feature type="active site" description="Proton donor" evidence="1">
    <location>
        <position position="249"/>
    </location>
</feature>
<feature type="active site" evidence="1">
    <location>
        <position position="277"/>
    </location>
</feature>
<feature type="sequence variant" description="In strain: 71.">
    <original>A</original>
    <variation>T</variation>
    <location>
        <position position="37"/>
    </location>
</feature>
<feature type="sequence variant" description="In strain: 71.">
    <original>I</original>
    <variation>V</variation>
    <location>
        <position position="297"/>
    </location>
</feature>
<feature type="sequence variant" description="In strain: 71.">
    <original>T</original>
    <variation>N</variation>
    <location>
        <position position="399"/>
    </location>
</feature>
<feature type="sequence conflict" description="In Ref. 2; AAA57139." evidence="2" ref="2">
    <original>K</original>
    <variation>N</variation>
    <location>
        <position position="396"/>
    </location>
</feature>
<protein>
    <recommendedName>
        <fullName>Endo-polygalacturonase</fullName>
        <ecNumber>3.2.1.15</ecNumber>
    </recommendedName>
</protein>
<dbReference type="EC" id="3.2.1.15"/>
<dbReference type="EMBL" id="X52944">
    <property type="protein sequence ID" value="CAA37119.1"/>
    <property type="molecule type" value="Genomic_DNA"/>
</dbReference>
<dbReference type="EMBL" id="L32172">
    <property type="protein sequence ID" value="AAA57139.1"/>
    <property type="molecule type" value="Genomic_DNA"/>
</dbReference>
<dbReference type="EMBL" id="M83222">
    <property type="protein sequence ID" value="AAA03624.1"/>
    <property type="molecule type" value="Unassigned_RNA"/>
</dbReference>
<dbReference type="PIR" id="S11773">
    <property type="entry name" value="S11773"/>
</dbReference>
<dbReference type="RefSeq" id="WP_039543807.1">
    <property type="nucleotide sequence ID" value="NZ_BRCK01000002.1"/>
</dbReference>
<dbReference type="SMR" id="P18192"/>
<dbReference type="CAZy" id="GH28">
    <property type="family name" value="Glycoside Hydrolase Family 28"/>
</dbReference>
<dbReference type="PATRIC" id="fig|555.16.peg.2200"/>
<dbReference type="GO" id="GO:0005576">
    <property type="term" value="C:extracellular region"/>
    <property type="evidence" value="ECO:0007669"/>
    <property type="project" value="UniProtKB-SubCell"/>
</dbReference>
<dbReference type="GO" id="GO:0004650">
    <property type="term" value="F:polygalacturonase activity"/>
    <property type="evidence" value="ECO:0007669"/>
    <property type="project" value="UniProtKB-EC"/>
</dbReference>
<dbReference type="GO" id="GO:0005975">
    <property type="term" value="P:carbohydrate metabolic process"/>
    <property type="evidence" value="ECO:0007669"/>
    <property type="project" value="InterPro"/>
</dbReference>
<dbReference type="GO" id="GO:0071555">
    <property type="term" value="P:cell wall organization"/>
    <property type="evidence" value="ECO:0007669"/>
    <property type="project" value="UniProtKB-KW"/>
</dbReference>
<dbReference type="Gene3D" id="2.160.20.10">
    <property type="entry name" value="Single-stranded right-handed beta-helix, Pectin lyase-like"/>
    <property type="match status" value="1"/>
</dbReference>
<dbReference type="InterPro" id="IPR051801">
    <property type="entry name" value="GH28_Enzymes"/>
</dbReference>
<dbReference type="InterPro" id="IPR000743">
    <property type="entry name" value="Glyco_hydro_28"/>
</dbReference>
<dbReference type="InterPro" id="IPR006626">
    <property type="entry name" value="PbH1"/>
</dbReference>
<dbReference type="InterPro" id="IPR012334">
    <property type="entry name" value="Pectin_lyas_fold"/>
</dbReference>
<dbReference type="InterPro" id="IPR011050">
    <property type="entry name" value="Pectin_lyase_fold/virulence"/>
</dbReference>
<dbReference type="PANTHER" id="PTHR31339">
    <property type="entry name" value="PECTIN LYASE-RELATED"/>
    <property type="match status" value="1"/>
</dbReference>
<dbReference type="PANTHER" id="PTHR31339:SF9">
    <property type="entry name" value="PLASMIN AND FIBRONECTIN-BINDING PROTEIN A"/>
    <property type="match status" value="1"/>
</dbReference>
<dbReference type="Pfam" id="PF00295">
    <property type="entry name" value="Glyco_hydro_28"/>
    <property type="match status" value="1"/>
</dbReference>
<dbReference type="SMART" id="SM00710">
    <property type="entry name" value="PbH1"/>
    <property type="match status" value="5"/>
</dbReference>
<dbReference type="SUPFAM" id="SSF51126">
    <property type="entry name" value="Pectin lyase-like"/>
    <property type="match status" value="1"/>
</dbReference>
<dbReference type="PROSITE" id="PS00502">
    <property type="entry name" value="POLYGALACTURONASE"/>
    <property type="match status" value="1"/>
</dbReference>
<keyword id="KW-0961">Cell wall biogenesis/degradation</keyword>
<keyword id="KW-0326">Glycosidase</keyword>
<keyword id="KW-0378">Hydrolase</keyword>
<keyword id="KW-0964">Secreted</keyword>
<keyword id="KW-0732">Signal</keyword>